<name>DAPB_CHAGB</name>
<accession>Q2HF90</accession>
<protein>
    <recommendedName>
        <fullName>Probable dipeptidyl-aminopeptidase B</fullName>
        <shortName>DPAP B</shortName>
        <ecNumber>3.4.14.5</ecNumber>
    </recommendedName>
</protein>
<feature type="chain" id="PRO_0000412141" description="Probable dipeptidyl-aminopeptidase B">
    <location>
        <begin position="1"/>
        <end position="925"/>
    </location>
</feature>
<feature type="topological domain" description="Cytoplasmic" evidence="2">
    <location>
        <begin position="1"/>
        <end position="110"/>
    </location>
</feature>
<feature type="transmembrane region" description="Helical; Signal-anchor for type II membrane protein" evidence="2">
    <location>
        <begin position="111"/>
        <end position="131"/>
    </location>
</feature>
<feature type="topological domain" description="Vacuolar" evidence="2">
    <location>
        <begin position="132"/>
        <end position="925"/>
    </location>
</feature>
<feature type="region of interest" description="Disordered" evidence="3">
    <location>
        <begin position="1"/>
        <end position="104"/>
    </location>
</feature>
<feature type="compositionally biased region" description="Low complexity" evidence="3">
    <location>
        <begin position="31"/>
        <end position="40"/>
    </location>
</feature>
<feature type="compositionally biased region" description="Basic and acidic residues" evidence="3">
    <location>
        <begin position="55"/>
        <end position="72"/>
    </location>
</feature>
<feature type="active site" description="Charge relay system" evidence="1">
    <location>
        <position position="773"/>
    </location>
</feature>
<feature type="active site" description="Charge relay system" evidence="1">
    <location>
        <position position="850"/>
    </location>
</feature>
<feature type="active site" description="Charge relay system" evidence="1">
    <location>
        <position position="883"/>
    </location>
</feature>
<feature type="glycosylation site" description="N-linked (GlcNAc...) asparagine" evidence="2">
    <location>
        <position position="369"/>
    </location>
</feature>
<feature type="glycosylation site" description="N-linked (GlcNAc...) asparagine" evidence="2">
    <location>
        <position position="832"/>
    </location>
</feature>
<proteinExistence type="inferred from homology"/>
<gene>
    <name type="primary">DAPB</name>
    <name type="ORF">CHGG_01114</name>
</gene>
<evidence type="ECO:0000250" key="1"/>
<evidence type="ECO:0000255" key="2"/>
<evidence type="ECO:0000256" key="3">
    <source>
        <dbReference type="SAM" id="MobiDB-lite"/>
    </source>
</evidence>
<evidence type="ECO:0000305" key="4"/>
<reference key="1">
    <citation type="journal article" date="2015" name="Genome Announc.">
        <title>Draft genome sequence of the cellulolytic fungus Chaetomium globosum.</title>
        <authorList>
            <person name="Cuomo C.A."/>
            <person name="Untereiner W.A."/>
            <person name="Ma L.-J."/>
            <person name="Grabherr M."/>
            <person name="Birren B.W."/>
        </authorList>
    </citation>
    <scope>NUCLEOTIDE SEQUENCE [LARGE SCALE GENOMIC DNA]</scope>
    <source>
        <strain>ATCC 6205 / CBS 148.51 / DSM 1962 / NBRC 6347 / NRRL 1970</strain>
    </source>
</reference>
<comment type="function">
    <text evidence="1">Type IV dipeptidyl-peptidase which removes N-terminal dipeptides sequentially from polypeptides having unsubstituted N-termini provided that the penultimate residue is proline.</text>
</comment>
<comment type="catalytic activity">
    <reaction>
        <text>Release of an N-terminal dipeptide, Xaa-Yaa-|-Zaa-, from a polypeptide, preferentially when Yaa is Pro, provided Zaa is neither Pro nor hydroxyproline.</text>
        <dbReference type="EC" id="3.4.14.5"/>
    </reaction>
</comment>
<comment type="subcellular location">
    <subcellularLocation>
        <location evidence="1">Vacuole membrane</location>
        <topology evidence="1">Single-pass type II membrane protein</topology>
    </subcellularLocation>
    <text evidence="1">Lysosome-like vacuoles.</text>
</comment>
<comment type="similarity">
    <text evidence="4">Belongs to the peptidase S9B family.</text>
</comment>
<dbReference type="EC" id="3.4.14.5"/>
<dbReference type="EMBL" id="CH408029">
    <property type="protein sequence ID" value="EAQ92879.1"/>
    <property type="molecule type" value="Genomic_DNA"/>
</dbReference>
<dbReference type="RefSeq" id="XP_001220335.1">
    <property type="nucleotide sequence ID" value="XM_001220334.1"/>
</dbReference>
<dbReference type="SMR" id="Q2HF90"/>
<dbReference type="FunCoup" id="Q2HF90">
    <property type="interactions" value="274"/>
</dbReference>
<dbReference type="STRING" id="306901.Q2HF90"/>
<dbReference type="ESTHER" id="chagb-q2hf90">
    <property type="family name" value="DPP4N_Peptidase_S9"/>
</dbReference>
<dbReference type="GlyCosmos" id="Q2HF90">
    <property type="glycosylation" value="2 sites, No reported glycans"/>
</dbReference>
<dbReference type="GeneID" id="4388188"/>
<dbReference type="VEuPathDB" id="FungiDB:CHGG_01114"/>
<dbReference type="eggNOG" id="KOG2100">
    <property type="taxonomic scope" value="Eukaryota"/>
</dbReference>
<dbReference type="HOGENOM" id="CLU_006105_0_1_1"/>
<dbReference type="InParanoid" id="Q2HF90"/>
<dbReference type="OMA" id="MRTPQEN"/>
<dbReference type="OrthoDB" id="16520at2759"/>
<dbReference type="Proteomes" id="UP000001056">
    <property type="component" value="Unassembled WGS sequence"/>
</dbReference>
<dbReference type="GO" id="GO:0000329">
    <property type="term" value="C:fungal-type vacuole membrane"/>
    <property type="evidence" value="ECO:0007669"/>
    <property type="project" value="EnsemblFungi"/>
</dbReference>
<dbReference type="GO" id="GO:0005886">
    <property type="term" value="C:plasma membrane"/>
    <property type="evidence" value="ECO:0007669"/>
    <property type="project" value="TreeGrafter"/>
</dbReference>
<dbReference type="GO" id="GO:0004177">
    <property type="term" value="F:aminopeptidase activity"/>
    <property type="evidence" value="ECO:0007669"/>
    <property type="project" value="UniProtKB-KW"/>
</dbReference>
<dbReference type="GO" id="GO:0008239">
    <property type="term" value="F:dipeptidyl-peptidase activity"/>
    <property type="evidence" value="ECO:0007669"/>
    <property type="project" value="UniProtKB-EC"/>
</dbReference>
<dbReference type="GO" id="GO:0008236">
    <property type="term" value="F:serine-type peptidase activity"/>
    <property type="evidence" value="ECO:0007669"/>
    <property type="project" value="UniProtKB-KW"/>
</dbReference>
<dbReference type="GO" id="GO:0006508">
    <property type="term" value="P:proteolysis"/>
    <property type="evidence" value="ECO:0007669"/>
    <property type="project" value="UniProtKB-KW"/>
</dbReference>
<dbReference type="FunFam" id="3.40.50.1820:FF:000003">
    <property type="entry name" value="Dipeptidyl peptidase 4"/>
    <property type="match status" value="1"/>
</dbReference>
<dbReference type="Gene3D" id="3.40.50.1820">
    <property type="entry name" value="alpha/beta hydrolase"/>
    <property type="match status" value="1"/>
</dbReference>
<dbReference type="Gene3D" id="2.140.10.30">
    <property type="entry name" value="Dipeptidylpeptidase IV, N-terminal domain"/>
    <property type="match status" value="1"/>
</dbReference>
<dbReference type="InterPro" id="IPR029058">
    <property type="entry name" value="AB_hydrolase_fold"/>
</dbReference>
<dbReference type="InterPro" id="IPR001375">
    <property type="entry name" value="Peptidase_S9_cat"/>
</dbReference>
<dbReference type="InterPro" id="IPR002469">
    <property type="entry name" value="Peptidase_S9B_N"/>
</dbReference>
<dbReference type="InterPro" id="IPR050278">
    <property type="entry name" value="Serine_Prot_S9B/DPPIV"/>
</dbReference>
<dbReference type="PANTHER" id="PTHR11731:SF200">
    <property type="entry name" value="DIPEPTIDYL PEPTIDASE 10, ISOFORM B"/>
    <property type="match status" value="1"/>
</dbReference>
<dbReference type="PANTHER" id="PTHR11731">
    <property type="entry name" value="PROTEASE FAMILY S9B,C DIPEPTIDYL-PEPTIDASE IV-RELATED"/>
    <property type="match status" value="1"/>
</dbReference>
<dbReference type="Pfam" id="PF00930">
    <property type="entry name" value="DPPIV_N"/>
    <property type="match status" value="1"/>
</dbReference>
<dbReference type="Pfam" id="PF00326">
    <property type="entry name" value="Peptidase_S9"/>
    <property type="match status" value="1"/>
</dbReference>
<dbReference type="SUPFAM" id="SSF53474">
    <property type="entry name" value="alpha/beta-Hydrolases"/>
    <property type="match status" value="1"/>
</dbReference>
<dbReference type="SUPFAM" id="SSF82171">
    <property type="entry name" value="DPP6 N-terminal domain-like"/>
    <property type="match status" value="1"/>
</dbReference>
<sequence length="925" mass="102583">MTPYRDVPPVSSRTHSSNRDRSQSRSRMSHESGSSVSTTSIVFDRISERVAAGDLSEKQPRGDDNEDALKDEPDNDDLETGPFLGNASGNGNSPRHAQKKGPGMDRGMRRALLIAAGLLVSAWVAGLFVYIATKSYKPASATAHDPQATIVRGSGKAVTLDQVMGSFWRPEVRSIQWIAGPEGEDGLLLERDAAGKDYLVVEDIRSQDAAAVDSSADAQAADARTLMEKGSFEYGKRVYNAVKVAPSRDLQRVLVATDVKSNWRHSSYAAYWIFDVKTQTADPLVPGEPDARIQLAQWNPTGDAVAFTRDNNLYLRKVGSDNIIQVTKDGGSEVFNGVPDWVYEEEVFSGSSATWWSEDGDYIAFLRTNETGVPEFPIDYFLKRPSGTEPKPGEEAYPETRKIKYPKAGAHNPVVELKFYDVVRGDVFSVDISGGFADDDRLITEVVWAGKQILVKETNRVSDVMRVVLVDVAARSGKTVRTTDVKAIDGGWFEITHQTKHIPADPSKGREHDGYIDLIIHGDGNHLAYFTPLDNPDPVMLTSGDWEVVDSPYAVDLDKNVVYFMATKESSIQRHVYQVKLTGEDLTAVSDTSSEGYYAASFSIGGGYALLTYQGPGIPWQKVISTPSNPRKYEHTVEENKDLADNAKKHELPIKIYGTINVDGVELNYVERRPAHFDASKKYPVLFQQYSGPGSQTVNKKFTVDFQSYVAAGLGYICVTVDGRGTGYIGRKNRVIVRGNLGQWEAHDQIAAAKIWAKKKYIDETRLAIWGWSFGGFNALKTLEQDAGETFRYGMAVAPVTDWRFYDSIYTERYMLTPQANGHGYDTSAIYNTTALGQNVRFLLMHGLADDNVHFQSSLTLLDKLNLAGVENYDVHVFPDSDHSIYFHNANRIVYDKLTNWLINAFNGEWIKVASPKPNGKRRAA</sequence>
<keyword id="KW-0031">Aminopeptidase</keyword>
<keyword id="KW-0325">Glycoprotein</keyword>
<keyword id="KW-0378">Hydrolase</keyword>
<keyword id="KW-0472">Membrane</keyword>
<keyword id="KW-0645">Protease</keyword>
<keyword id="KW-1185">Reference proteome</keyword>
<keyword id="KW-0720">Serine protease</keyword>
<keyword id="KW-0735">Signal-anchor</keyword>
<keyword id="KW-0812">Transmembrane</keyword>
<keyword id="KW-1133">Transmembrane helix</keyword>
<keyword id="KW-0926">Vacuole</keyword>
<organism>
    <name type="scientific">Chaetomium globosum (strain ATCC 6205 / CBS 148.51 / DSM 1962 / NBRC 6347 / NRRL 1970)</name>
    <name type="common">Soil fungus</name>
    <dbReference type="NCBI Taxonomy" id="306901"/>
    <lineage>
        <taxon>Eukaryota</taxon>
        <taxon>Fungi</taxon>
        <taxon>Dikarya</taxon>
        <taxon>Ascomycota</taxon>
        <taxon>Pezizomycotina</taxon>
        <taxon>Sordariomycetes</taxon>
        <taxon>Sordariomycetidae</taxon>
        <taxon>Sordariales</taxon>
        <taxon>Chaetomiaceae</taxon>
        <taxon>Chaetomium</taxon>
    </lineage>
</organism>